<accession>Q8K9C1</accession>
<evidence type="ECO:0000255" key="1">
    <source>
        <dbReference type="HAMAP-Rule" id="MF_00009"/>
    </source>
</evidence>
<evidence type="ECO:0000305" key="2"/>
<organism>
    <name type="scientific">Buchnera aphidicola subsp. Schizaphis graminum (strain Sg)</name>
    <dbReference type="NCBI Taxonomy" id="198804"/>
    <lineage>
        <taxon>Bacteria</taxon>
        <taxon>Pseudomonadati</taxon>
        <taxon>Pseudomonadota</taxon>
        <taxon>Gammaproteobacteria</taxon>
        <taxon>Enterobacterales</taxon>
        <taxon>Erwiniaceae</taxon>
        <taxon>Buchnera</taxon>
    </lineage>
</organism>
<reference key="1">
    <citation type="journal article" date="2002" name="Science">
        <title>50 million years of genomic stasis in endosymbiotic bacteria.</title>
        <authorList>
            <person name="Tamas I."/>
            <person name="Klasson L."/>
            <person name="Canbaeck B."/>
            <person name="Naeslund A.K."/>
            <person name="Eriksson A.-S."/>
            <person name="Wernegreen J.J."/>
            <person name="Sandstroem J.P."/>
            <person name="Moran N.A."/>
            <person name="Andersson S.G.E."/>
        </authorList>
    </citation>
    <scope>NUCLEOTIDE SEQUENCE [LARGE SCALE GENOMIC DNA]</scope>
    <source>
        <strain>Sg</strain>
    </source>
</reference>
<proteinExistence type="inferred from homology"/>
<name>YBEY_BUCAP</name>
<comment type="function">
    <text evidence="1">Single strand-specific metallo-endoribonuclease involved in late-stage 70S ribosome quality control and in maturation of the 3' terminus of the 16S rRNA.</text>
</comment>
<comment type="cofactor">
    <cofactor evidence="1">
        <name>Zn(2+)</name>
        <dbReference type="ChEBI" id="CHEBI:29105"/>
    </cofactor>
    <text evidence="1">Binds 1 zinc ion.</text>
</comment>
<comment type="subcellular location">
    <subcellularLocation>
        <location evidence="1">Cytoplasm</location>
    </subcellularLocation>
</comment>
<comment type="similarity">
    <text evidence="1">Belongs to the endoribonuclease YbeY family.</text>
</comment>
<comment type="sequence caution" evidence="2">
    <conflict type="frameshift">
        <sequence resource="EMBL-CDS" id="AAM67970"/>
    </conflict>
</comment>
<keyword id="KW-0963">Cytoplasm</keyword>
<keyword id="KW-0255">Endonuclease</keyword>
<keyword id="KW-0378">Hydrolase</keyword>
<keyword id="KW-0479">Metal-binding</keyword>
<keyword id="KW-0540">Nuclease</keyword>
<keyword id="KW-0690">Ribosome biogenesis</keyword>
<keyword id="KW-0698">rRNA processing</keyword>
<keyword id="KW-0862">Zinc</keyword>
<sequence length="158" mass="19109">MKKKNNIILTIQKNCKNTKNIPKKYIFEKWIKKVLYKKKNVNLINIRIVDEREMKNINLKYRGKNKSTNILSFKFDLFINKNQTLLGDLVLCKKIIEKESLKYQKTLESRWAHMIIHGTLHLLGYDHKNKKEKKIMEKIENKIMLFLNYEKPYFMKSS</sequence>
<feature type="chain" id="PRO_0000102426" description="Endoribonuclease YbeY">
    <location>
        <begin position="1"/>
        <end position="158"/>
    </location>
</feature>
<feature type="binding site" evidence="1">
    <location>
        <position position="117"/>
    </location>
    <ligand>
        <name>Zn(2+)</name>
        <dbReference type="ChEBI" id="CHEBI:29105"/>
        <note>catalytic</note>
    </ligand>
</feature>
<feature type="binding site" evidence="1">
    <location>
        <position position="121"/>
    </location>
    <ligand>
        <name>Zn(2+)</name>
        <dbReference type="ChEBI" id="CHEBI:29105"/>
        <note>catalytic</note>
    </ligand>
</feature>
<feature type="binding site" evidence="1">
    <location>
        <position position="127"/>
    </location>
    <ligand>
        <name>Zn(2+)</name>
        <dbReference type="ChEBI" id="CHEBI:29105"/>
        <note>catalytic</note>
    </ligand>
</feature>
<protein>
    <recommendedName>
        <fullName evidence="1">Endoribonuclease YbeY</fullName>
        <ecNumber evidence="1">3.1.-.-</ecNumber>
    </recommendedName>
</protein>
<gene>
    <name evidence="1" type="primary">ybeY</name>
    <name type="ordered locus">BUsg_427</name>
</gene>
<dbReference type="EC" id="3.1.-.-" evidence="1"/>
<dbReference type="EMBL" id="AE013218">
    <property type="protein sequence ID" value="AAM67970.1"/>
    <property type="status" value="ALT_FRAME"/>
    <property type="molecule type" value="Genomic_DNA"/>
</dbReference>
<dbReference type="SMR" id="Q8K9C1"/>
<dbReference type="STRING" id="198804.BUsg_427"/>
<dbReference type="KEGG" id="bas:BUsg_427"/>
<dbReference type="eggNOG" id="COG0319">
    <property type="taxonomic scope" value="Bacteria"/>
</dbReference>
<dbReference type="HOGENOM" id="CLU_106710_0_2_6"/>
<dbReference type="Proteomes" id="UP000000416">
    <property type="component" value="Chromosome"/>
</dbReference>
<dbReference type="GO" id="GO:0005737">
    <property type="term" value="C:cytoplasm"/>
    <property type="evidence" value="ECO:0007669"/>
    <property type="project" value="UniProtKB-SubCell"/>
</dbReference>
<dbReference type="GO" id="GO:0004222">
    <property type="term" value="F:metalloendopeptidase activity"/>
    <property type="evidence" value="ECO:0007669"/>
    <property type="project" value="InterPro"/>
</dbReference>
<dbReference type="GO" id="GO:0004521">
    <property type="term" value="F:RNA endonuclease activity"/>
    <property type="evidence" value="ECO:0007669"/>
    <property type="project" value="UniProtKB-UniRule"/>
</dbReference>
<dbReference type="GO" id="GO:0008270">
    <property type="term" value="F:zinc ion binding"/>
    <property type="evidence" value="ECO:0007669"/>
    <property type="project" value="UniProtKB-UniRule"/>
</dbReference>
<dbReference type="GO" id="GO:0006364">
    <property type="term" value="P:rRNA processing"/>
    <property type="evidence" value="ECO:0007669"/>
    <property type="project" value="UniProtKB-UniRule"/>
</dbReference>
<dbReference type="Gene3D" id="3.40.390.30">
    <property type="entry name" value="Metalloproteases ('zincins'), catalytic domain"/>
    <property type="match status" value="1"/>
</dbReference>
<dbReference type="HAMAP" id="MF_00009">
    <property type="entry name" value="Endoribonucl_YbeY"/>
    <property type="match status" value="1"/>
</dbReference>
<dbReference type="InterPro" id="IPR023091">
    <property type="entry name" value="MetalPrtase_cat_dom_sf_prd"/>
</dbReference>
<dbReference type="InterPro" id="IPR002036">
    <property type="entry name" value="YbeY"/>
</dbReference>
<dbReference type="InterPro" id="IPR020549">
    <property type="entry name" value="YbeY_CS"/>
</dbReference>
<dbReference type="NCBIfam" id="TIGR00043">
    <property type="entry name" value="rRNA maturation RNase YbeY"/>
    <property type="match status" value="1"/>
</dbReference>
<dbReference type="PANTHER" id="PTHR46986">
    <property type="entry name" value="ENDORIBONUCLEASE YBEY, CHLOROPLASTIC"/>
    <property type="match status" value="1"/>
</dbReference>
<dbReference type="PANTHER" id="PTHR46986:SF1">
    <property type="entry name" value="ENDORIBONUCLEASE YBEY, CHLOROPLASTIC"/>
    <property type="match status" value="1"/>
</dbReference>
<dbReference type="Pfam" id="PF02130">
    <property type="entry name" value="YbeY"/>
    <property type="match status" value="1"/>
</dbReference>
<dbReference type="SUPFAM" id="SSF55486">
    <property type="entry name" value="Metalloproteases ('zincins'), catalytic domain"/>
    <property type="match status" value="1"/>
</dbReference>
<dbReference type="PROSITE" id="PS01306">
    <property type="entry name" value="UPF0054"/>
    <property type="match status" value="1"/>
</dbReference>